<accession>P9WES6</accession>
<accession>A0A017SEE6</accession>
<proteinExistence type="inferred from homology"/>
<protein>
    <recommendedName>
        <fullName evidence="3">Cupin-domain-containing oxidoreductase fogC</fullName>
        <ecNumber evidence="5">1.-.-.-</ecNumber>
    </recommendedName>
    <alternativeName>
        <fullName evidence="3">Flavoglaucin biosynthesis cluster protein C</fullName>
    </alternativeName>
</protein>
<gene>
    <name evidence="3" type="primary">fogC</name>
    <name type="ORF">EURHEDRAFT_377419</name>
</gene>
<evidence type="ECO:0000255" key="1"/>
<evidence type="ECO:0000269" key="2">
    <source>
    </source>
</evidence>
<evidence type="ECO:0000303" key="3">
    <source>
    </source>
</evidence>
<evidence type="ECO:0000305" key="4"/>
<evidence type="ECO:0000305" key="5">
    <source>
    </source>
</evidence>
<organism>
    <name type="scientific">Aspergillus ruber (strain CBS 135680)</name>
    <dbReference type="NCBI Taxonomy" id="1388766"/>
    <lineage>
        <taxon>Eukaryota</taxon>
        <taxon>Fungi</taxon>
        <taxon>Dikarya</taxon>
        <taxon>Ascomycota</taxon>
        <taxon>Pezizomycotina</taxon>
        <taxon>Eurotiomycetes</taxon>
        <taxon>Eurotiomycetidae</taxon>
        <taxon>Eurotiales</taxon>
        <taxon>Aspergillaceae</taxon>
        <taxon>Aspergillus</taxon>
        <taxon>Aspergillus subgen. Aspergillus</taxon>
    </lineage>
</organism>
<reference key="1">
    <citation type="journal article" date="2014" name="Nat. Commun.">
        <title>Genomic adaptations of the halophilic Dead Sea filamentous fungus Eurotium rubrum.</title>
        <authorList>
            <person name="Kis-Papo T."/>
            <person name="Weig A.R."/>
            <person name="Riley R."/>
            <person name="Persoh D."/>
            <person name="Salamov A."/>
            <person name="Sun H."/>
            <person name="Lipzen A."/>
            <person name="Wasser S.P."/>
            <person name="Rambold G."/>
            <person name="Grigoriev I.V."/>
            <person name="Nevo E."/>
        </authorList>
    </citation>
    <scope>NUCLEOTIDE SEQUENCE [LARGE SCALE GENOMIC DNA]</scope>
    <source>
        <strain>CBS 135680</strain>
    </source>
</reference>
<reference key="2">
    <citation type="journal article" date="2020" name="Org. Lett.">
        <title>Biosynthesis of the prenylated salicylaldehyde flavoglaucin requires temporary reduction to salicyl alcohol for decoration before reoxidation to the final product.</title>
        <authorList>
            <person name="Nies J."/>
            <person name="Ran H."/>
            <person name="Wohlgemuth V."/>
            <person name="Yin W.B."/>
            <person name="Li S.M."/>
        </authorList>
    </citation>
    <scope>FUNCTION</scope>
    <scope>DISRUPTION PHENOTYPE</scope>
    <scope>PATHWAY</scope>
</reference>
<dbReference type="EC" id="1.-.-.-" evidence="5"/>
<dbReference type="EMBL" id="KK088422">
    <property type="protein sequence ID" value="EYE95337.1"/>
    <property type="status" value="ALT_SEQ"/>
    <property type="molecule type" value="Genomic_DNA"/>
</dbReference>
<dbReference type="SMR" id="P9WES6"/>
<dbReference type="HOGENOM" id="CLU_649009_0_0_1"/>
<dbReference type="OrthoDB" id="5840532at2759"/>
<dbReference type="Proteomes" id="UP000019804">
    <property type="component" value="Unassembled WGS sequence"/>
</dbReference>
<dbReference type="GO" id="GO:0016491">
    <property type="term" value="F:oxidoreductase activity"/>
    <property type="evidence" value="ECO:0007669"/>
    <property type="project" value="UniProtKB-KW"/>
</dbReference>
<dbReference type="CDD" id="cd02231">
    <property type="entry name" value="cupin_BLL6423-like"/>
    <property type="match status" value="1"/>
</dbReference>
<dbReference type="Gene3D" id="2.60.120.10">
    <property type="entry name" value="Jelly Rolls"/>
    <property type="match status" value="1"/>
</dbReference>
<dbReference type="InterPro" id="IPR047142">
    <property type="entry name" value="OryJ/VirC-like"/>
</dbReference>
<dbReference type="InterPro" id="IPR014710">
    <property type="entry name" value="RmlC-like_jellyroll"/>
</dbReference>
<dbReference type="InterPro" id="IPR011051">
    <property type="entry name" value="RmlC_Cupin_sf"/>
</dbReference>
<dbReference type="PANTHER" id="PTHR36156:SF2">
    <property type="entry name" value="CUPIN TYPE-2 DOMAIN-CONTAINING PROTEIN"/>
    <property type="match status" value="1"/>
</dbReference>
<dbReference type="PANTHER" id="PTHR36156">
    <property type="entry name" value="SLR2101 PROTEIN"/>
    <property type="match status" value="1"/>
</dbReference>
<dbReference type="SUPFAM" id="SSF51182">
    <property type="entry name" value="RmlC-like cupins"/>
    <property type="match status" value="1"/>
</dbReference>
<name>FOGC_ASPRC</name>
<feature type="chain" id="PRO_0000456594" description="Cupin-domain-containing oxidoreductase fogC">
    <location>
        <begin position="1"/>
        <end position="203"/>
    </location>
</feature>
<feature type="region of interest" description="Cupin-like domain" evidence="1">
    <location>
        <begin position="105"/>
        <end position="171"/>
    </location>
</feature>
<comment type="function">
    <text evidence="2">Cupin-domain-containing oxidoreductase; part of the gene cluster that mediates the biosynthesis of flavoglaucin and congeners (including aspergin, dihydroauroglaucin and auroglaucin), prenylated salicylaldehyde derivatives carrying a saturated or an unsaturated C-7 side chain (PubMed:32134669). The PKS fogA releases the carboxylic acid (8E,10E,12E)-3,5,7-trihydroxytetradeca-8,10,12-trienoic acid as its product, as well as derivatives with one and two double bonds (PubMed:32134669). FogA is indeed able to reduce the initial triketide, thus being at least partially responsible for the differently saturated heptyl side chains of flavoglaucin congeners (PubMed:32134669). The oxidoreductases fogB, fogC and fogD modify the nascent polyketide in fogA-bound form and, together, fogA, fogB, fogC and fogD are necessary for the formation of the aromatic core and the cyclized PKS products are released as salicyl alcohols (PubMed:32134669). In particular, fogB is responsible for oxidation of a hydroxyl group or reduction of remaining double bond(s) at the C-7 residue whereas fogD is probably involved in the reductive release of the modified PKS products (PubMed:32134669). The cytochrome P450 monooxygenase fogE is then responsible for the hydroxylation at C-3 of the benzene ring (PubMed:32134669). The fogE products are substrates of the prenyltransferase fogH and the prenylated benzyl alcohols are subsequently oxidized by the fogF to produce the final aryl aldehydes flavoglaucin and congeners (PubMed:32134669). The short-chain dehydrogenase fogG does not seem to be involved in the biosynthesis of the prenylated salicylaldehyde derivatives (PubMed:32134669).</text>
</comment>
<comment type="pathway">
    <text evidence="2">Secondary metabolite biosynthesis.</text>
</comment>
<comment type="disruption phenotype">
    <text evidence="2">Impairs the production of flavoglaucin and congeners.</text>
</comment>
<comment type="similarity">
    <text evidence="4">Belongs to the virC family.</text>
</comment>
<comment type="sequence caution" evidence="2">
    <conflict type="erroneous gene model prediction">
        <sequence resource="EMBL-CDS" id="EYE95337"/>
    </conflict>
    <text>The predicted gene has been split into 2 genes: fogB and fogC.</text>
</comment>
<sequence length="203" mass="22259">MAEQTETSTAGYNYVSYGTEQHPIAGLSRVVRHITGHDSEGRSVFLSTDIGDHHRTLGEKQAISNIIYSTNQTPVELNGNHDIEFARNTEPGLHVKDGSVARLIDFAPGVESPLHRAVSLDYGVVIEGVFKMVLDSGEERIMRPGDISVQRATAHKWINVTGNGTLPGRMLFVLLDCNDVYVNGKKMEGYLGTLAKDYEGRSS</sequence>
<keyword id="KW-0560">Oxidoreductase</keyword>
<keyword id="KW-1185">Reference proteome</keyword>